<accession>Q5U2X7</accession>
<gene>
    <name type="primary">Timm21</name>
    <name type="synonym">Tim21</name>
</gene>
<keyword id="KW-0472">Membrane</keyword>
<keyword id="KW-0496">Mitochondrion</keyword>
<keyword id="KW-0653">Protein transport</keyword>
<keyword id="KW-1185">Reference proteome</keyword>
<keyword id="KW-0809">Transit peptide</keyword>
<keyword id="KW-0811">Translocation</keyword>
<keyword id="KW-0812">Transmembrane</keyword>
<keyword id="KW-1133">Transmembrane helix</keyword>
<keyword id="KW-0813">Transport</keyword>
<sequence>MICAFLRVVRHAEKLHGSLGRQLLLPHFVLTKACLKTQPLRWGLREQKKTVQPRTVLGFTQKTFWTQGPDPRKAKEDSSKQVSINRNQREETGVSTSQKVKEAGRDVTYLIVVLFGVSITGSLLYTIFKELFSSSSPNIIYGKALGKCRTHPEVISVFGEPVKGYGEMSRRGRRQHVSFTEYANNGLKRIRVKFYIEGSEPGKQGTVHAEVEENPRSGQFDFRYIFVDVAPKRSIVVEDNRFQQS</sequence>
<reference key="1">
    <citation type="journal article" date="2004" name="Genome Res.">
        <title>The status, quality, and expansion of the NIH full-length cDNA project: the Mammalian Gene Collection (MGC).</title>
        <authorList>
            <consortium name="The MGC Project Team"/>
        </authorList>
    </citation>
    <scope>NUCLEOTIDE SEQUENCE [LARGE SCALE MRNA]</scope>
    <source>
        <tissue>Kidney</tissue>
    </source>
</reference>
<dbReference type="EMBL" id="BC085823">
    <property type="protein sequence ID" value="AAH85823.1"/>
    <property type="molecule type" value="mRNA"/>
</dbReference>
<dbReference type="RefSeq" id="NP_001008344.1">
    <property type="nucleotide sequence ID" value="NM_001008343.1"/>
</dbReference>
<dbReference type="SMR" id="Q5U2X7"/>
<dbReference type="FunCoup" id="Q5U2X7">
    <property type="interactions" value="2621"/>
</dbReference>
<dbReference type="STRING" id="10116.ENSRNOP00000020376"/>
<dbReference type="iPTMnet" id="Q5U2X7"/>
<dbReference type="PhosphoSitePlus" id="Q5U2X7"/>
<dbReference type="SwissPalm" id="Q5U2X7"/>
<dbReference type="jPOST" id="Q5U2X7"/>
<dbReference type="PaxDb" id="10116-ENSRNOP00000020376"/>
<dbReference type="Ensembl" id="ENSRNOT00000020376.5">
    <property type="protein sequence ID" value="ENSRNOP00000020376.3"/>
    <property type="gene ID" value="ENSRNOG00000015142.5"/>
</dbReference>
<dbReference type="GeneID" id="307210"/>
<dbReference type="KEGG" id="rno:307210"/>
<dbReference type="AGR" id="RGD:1307279"/>
<dbReference type="CTD" id="29090"/>
<dbReference type="RGD" id="1307279">
    <property type="gene designation" value="Timm21"/>
</dbReference>
<dbReference type="eggNOG" id="KOG4836">
    <property type="taxonomic scope" value="Eukaryota"/>
</dbReference>
<dbReference type="GeneTree" id="ENSGT00390000011552"/>
<dbReference type="HOGENOM" id="CLU_099476_0_0_1"/>
<dbReference type="InParanoid" id="Q5U2X7"/>
<dbReference type="OrthoDB" id="436405at2759"/>
<dbReference type="PhylomeDB" id="Q5U2X7"/>
<dbReference type="TreeFam" id="TF315067"/>
<dbReference type="Reactome" id="R-RNO-9864848">
    <property type="pathway name" value="Complex IV assembly"/>
</dbReference>
<dbReference type="PRO" id="PR:Q5U2X7"/>
<dbReference type="Proteomes" id="UP000002494">
    <property type="component" value="Chromosome 18"/>
</dbReference>
<dbReference type="Bgee" id="ENSRNOG00000015142">
    <property type="expression patterns" value="Expressed in heart and 20 other cell types or tissues"/>
</dbReference>
<dbReference type="GO" id="GO:0005744">
    <property type="term" value="C:TIM23 mitochondrial import inner membrane translocase complex"/>
    <property type="evidence" value="ECO:0000250"/>
    <property type="project" value="UniProtKB"/>
</dbReference>
<dbReference type="GO" id="GO:0033617">
    <property type="term" value="P:mitochondrial cytochrome c oxidase assembly"/>
    <property type="evidence" value="ECO:0000250"/>
    <property type="project" value="UniProtKB"/>
</dbReference>
<dbReference type="GO" id="GO:0032981">
    <property type="term" value="P:mitochondrial respiratory chain complex I assembly"/>
    <property type="evidence" value="ECO:0000250"/>
    <property type="project" value="UniProtKB"/>
</dbReference>
<dbReference type="GO" id="GO:0030150">
    <property type="term" value="P:protein import into mitochondrial matrix"/>
    <property type="evidence" value="ECO:0000250"/>
    <property type="project" value="UniProtKB"/>
</dbReference>
<dbReference type="FunFam" id="3.10.450.320:FF:000001">
    <property type="entry name" value="Mitochondrial import inner membrane translocase subunit Tim21"/>
    <property type="match status" value="1"/>
</dbReference>
<dbReference type="Gene3D" id="3.10.450.320">
    <property type="entry name" value="Mitochondrial import inner membrane translocase subunit Tim21"/>
    <property type="match status" value="1"/>
</dbReference>
<dbReference type="InterPro" id="IPR013261">
    <property type="entry name" value="Tim21"/>
</dbReference>
<dbReference type="InterPro" id="IPR038552">
    <property type="entry name" value="Tim21_IMS_sf"/>
</dbReference>
<dbReference type="PANTHER" id="PTHR13032">
    <property type="entry name" value="MITOCHONDRIAL IMPORT INNER MEMBRANE TRANSLOCASE SUBUNIT TIM21"/>
    <property type="match status" value="1"/>
</dbReference>
<dbReference type="PANTHER" id="PTHR13032:SF6">
    <property type="entry name" value="MITOCHONDRIAL IMPORT INNER MEMBRANE TRANSLOCASE SUBUNIT TIM21"/>
    <property type="match status" value="1"/>
</dbReference>
<dbReference type="Pfam" id="PF08294">
    <property type="entry name" value="TIM21"/>
    <property type="match status" value="1"/>
</dbReference>
<evidence type="ECO:0000250" key="1">
    <source>
        <dbReference type="UniProtKB" id="Q9BVV7"/>
    </source>
</evidence>
<evidence type="ECO:0000255" key="2"/>
<evidence type="ECO:0000256" key="3">
    <source>
        <dbReference type="SAM" id="MobiDB-lite"/>
    </source>
</evidence>
<evidence type="ECO:0000305" key="4"/>
<protein>
    <recommendedName>
        <fullName>Mitochondrial import inner membrane translocase subunit Tim21</fullName>
    </recommendedName>
    <alternativeName>
        <fullName>TIM21-like protein, mitochondrial</fullName>
    </alternativeName>
</protein>
<feature type="transit peptide" description="Mitochondrion" evidence="2">
    <location>
        <begin position="1"/>
        <end position="18"/>
    </location>
</feature>
<feature type="chain" id="PRO_0000043231" description="Mitochondrial import inner membrane translocase subunit Tim21">
    <location>
        <begin position="19"/>
        <end position="245"/>
    </location>
</feature>
<feature type="transmembrane region" description="Helical" evidence="2">
    <location>
        <begin position="108"/>
        <end position="128"/>
    </location>
</feature>
<feature type="region of interest" description="Disordered" evidence="3">
    <location>
        <begin position="64"/>
        <end position="97"/>
    </location>
</feature>
<feature type="compositionally biased region" description="Basic and acidic residues" evidence="3">
    <location>
        <begin position="70"/>
        <end position="79"/>
    </location>
</feature>
<comment type="function">
    <text evidence="1">Participates in the translocation of transit peptide-containing proteins across the mitochondrial inner membrane. Also required for assembly of mitochondrial respiratory chain complex I and complex IV as component of the MITRAC (mitochondrial translation regulation assembly intermediate of cytochrome c oxidase complex) complex. Probably shuttles between the presequence translocase and respiratory-chain assembly intermediates in a process that promotes incorporation of early nuclear-encoded subunits into these complexes.</text>
</comment>
<comment type="subunit">
    <text evidence="1">Component of the TIM23 complex. Component of the MITRAC (mitochondrial translation regulation assembly intermediate of cytochrome c oxidase complex) complex, the core components of this complex being COA3/MITRAC12 and COX14. Interacts with COA3 and MT-CO1/COX1.</text>
</comment>
<comment type="subcellular location">
    <subcellularLocation>
        <location evidence="4">Mitochondrion membrane</location>
        <topology evidence="4">Single-pass membrane protein</topology>
    </subcellularLocation>
</comment>
<comment type="similarity">
    <text evidence="4">Belongs to the TIM21 family.</text>
</comment>
<organism>
    <name type="scientific">Rattus norvegicus</name>
    <name type="common">Rat</name>
    <dbReference type="NCBI Taxonomy" id="10116"/>
    <lineage>
        <taxon>Eukaryota</taxon>
        <taxon>Metazoa</taxon>
        <taxon>Chordata</taxon>
        <taxon>Craniata</taxon>
        <taxon>Vertebrata</taxon>
        <taxon>Euteleostomi</taxon>
        <taxon>Mammalia</taxon>
        <taxon>Eutheria</taxon>
        <taxon>Euarchontoglires</taxon>
        <taxon>Glires</taxon>
        <taxon>Rodentia</taxon>
        <taxon>Myomorpha</taxon>
        <taxon>Muroidea</taxon>
        <taxon>Muridae</taxon>
        <taxon>Murinae</taxon>
        <taxon>Rattus</taxon>
    </lineage>
</organism>
<name>TIM21_RAT</name>
<proteinExistence type="evidence at transcript level"/>